<gene>
    <name evidence="1" type="primary">speE</name>
    <name type="ordered locus">SYNW2421</name>
</gene>
<name>SPEE_PARMW</name>
<keyword id="KW-0963">Cytoplasm</keyword>
<keyword id="KW-0620">Polyamine biosynthesis</keyword>
<keyword id="KW-0745">Spermidine biosynthesis</keyword>
<keyword id="KW-0808">Transferase</keyword>
<sequence>MGGWIDEEHRGVRYGLAGDVLVEETSPFQRISVIRSERYGKGLLLDGCWMTAEQQERHYHEALVHPALCSAEAIERVLVIGGGDGGTARECLRYPEVIHLDLVEIDGRVVELSQEHLPGIGGAVWSDSRCQLTVGDGIAWAANAPDQSYDVVLVDGSDPAGPAEGLFNRAFFEHCRRILKPGGVFATQSESPEAFREVHVAMVRLLREVFGHADPLYGWVPMYPSGWWSWTFAAVDGPRYRTVQPARAALVAEGCEIWSPRWQQGALDAVPAFIARELAP</sequence>
<evidence type="ECO:0000255" key="1">
    <source>
        <dbReference type="HAMAP-Rule" id="MF_00198"/>
    </source>
</evidence>
<accession>Q7U3L0</accession>
<protein>
    <recommendedName>
        <fullName evidence="1">Polyamine aminopropyltransferase</fullName>
    </recommendedName>
    <alternativeName>
        <fullName evidence="1">Putrescine aminopropyltransferase</fullName>
        <shortName evidence="1">PAPT</shortName>
    </alternativeName>
    <alternativeName>
        <fullName evidence="1">Spermidine synthase</fullName>
        <shortName evidence="1">SPDS</shortName>
        <shortName evidence="1">SPDSY</shortName>
        <ecNumber evidence="1">2.5.1.16</ecNumber>
    </alternativeName>
</protein>
<organism>
    <name type="scientific">Parasynechococcus marenigrum (strain WH8102)</name>
    <dbReference type="NCBI Taxonomy" id="84588"/>
    <lineage>
        <taxon>Bacteria</taxon>
        <taxon>Bacillati</taxon>
        <taxon>Cyanobacteriota</taxon>
        <taxon>Cyanophyceae</taxon>
        <taxon>Synechococcales</taxon>
        <taxon>Prochlorococcaceae</taxon>
        <taxon>Parasynechococcus</taxon>
        <taxon>Parasynechococcus marenigrum</taxon>
    </lineage>
</organism>
<dbReference type="EC" id="2.5.1.16" evidence="1"/>
<dbReference type="EMBL" id="BX569695">
    <property type="protein sequence ID" value="CAE08936.1"/>
    <property type="molecule type" value="Genomic_DNA"/>
</dbReference>
<dbReference type="RefSeq" id="WP_011129274.1">
    <property type="nucleotide sequence ID" value="NC_005070.1"/>
</dbReference>
<dbReference type="SMR" id="Q7U3L0"/>
<dbReference type="STRING" id="84588.SYNW2421"/>
<dbReference type="KEGG" id="syw:SYNW2421"/>
<dbReference type="eggNOG" id="COG0421">
    <property type="taxonomic scope" value="Bacteria"/>
</dbReference>
<dbReference type="HOGENOM" id="CLU_048199_0_0_3"/>
<dbReference type="UniPathway" id="UPA00248">
    <property type="reaction ID" value="UER00314"/>
</dbReference>
<dbReference type="Proteomes" id="UP000001422">
    <property type="component" value="Chromosome"/>
</dbReference>
<dbReference type="GO" id="GO:0005829">
    <property type="term" value="C:cytosol"/>
    <property type="evidence" value="ECO:0007669"/>
    <property type="project" value="TreeGrafter"/>
</dbReference>
<dbReference type="GO" id="GO:0004766">
    <property type="term" value="F:spermidine synthase activity"/>
    <property type="evidence" value="ECO:0007669"/>
    <property type="project" value="UniProtKB-UniRule"/>
</dbReference>
<dbReference type="GO" id="GO:0008295">
    <property type="term" value="P:spermidine biosynthetic process"/>
    <property type="evidence" value="ECO:0007669"/>
    <property type="project" value="UniProtKB-UniRule"/>
</dbReference>
<dbReference type="CDD" id="cd02440">
    <property type="entry name" value="AdoMet_MTases"/>
    <property type="match status" value="1"/>
</dbReference>
<dbReference type="Gene3D" id="2.30.140.10">
    <property type="entry name" value="Spermidine synthase, tetramerisation domain"/>
    <property type="match status" value="1"/>
</dbReference>
<dbReference type="Gene3D" id="3.40.50.150">
    <property type="entry name" value="Vaccinia Virus protein VP39"/>
    <property type="match status" value="1"/>
</dbReference>
<dbReference type="HAMAP" id="MF_00198">
    <property type="entry name" value="Spermidine_synth"/>
    <property type="match status" value="1"/>
</dbReference>
<dbReference type="InterPro" id="IPR030374">
    <property type="entry name" value="PABS"/>
</dbReference>
<dbReference type="InterPro" id="IPR030373">
    <property type="entry name" value="PABS_CS"/>
</dbReference>
<dbReference type="InterPro" id="IPR029063">
    <property type="entry name" value="SAM-dependent_MTases_sf"/>
</dbReference>
<dbReference type="InterPro" id="IPR001045">
    <property type="entry name" value="Spermi_synthase"/>
</dbReference>
<dbReference type="InterPro" id="IPR035246">
    <property type="entry name" value="Spermidine_synt_N"/>
</dbReference>
<dbReference type="InterPro" id="IPR037163">
    <property type="entry name" value="Spermidine_synt_N_sf"/>
</dbReference>
<dbReference type="NCBIfam" id="NF002010">
    <property type="entry name" value="PRK00811.1"/>
    <property type="match status" value="1"/>
</dbReference>
<dbReference type="PANTHER" id="PTHR11558:SF11">
    <property type="entry name" value="SPERMIDINE SYNTHASE"/>
    <property type="match status" value="1"/>
</dbReference>
<dbReference type="PANTHER" id="PTHR11558">
    <property type="entry name" value="SPERMIDINE/SPERMINE SYNTHASE"/>
    <property type="match status" value="1"/>
</dbReference>
<dbReference type="Pfam" id="PF17284">
    <property type="entry name" value="Spermine_synt_N"/>
    <property type="match status" value="1"/>
</dbReference>
<dbReference type="Pfam" id="PF01564">
    <property type="entry name" value="Spermine_synth"/>
    <property type="match status" value="1"/>
</dbReference>
<dbReference type="SUPFAM" id="SSF53335">
    <property type="entry name" value="S-adenosyl-L-methionine-dependent methyltransferases"/>
    <property type="match status" value="1"/>
</dbReference>
<dbReference type="PROSITE" id="PS01330">
    <property type="entry name" value="PABS_1"/>
    <property type="match status" value="1"/>
</dbReference>
<dbReference type="PROSITE" id="PS51006">
    <property type="entry name" value="PABS_2"/>
    <property type="match status" value="1"/>
</dbReference>
<reference key="1">
    <citation type="journal article" date="2003" name="Nature">
        <title>The genome of a motile marine Synechococcus.</title>
        <authorList>
            <person name="Palenik B."/>
            <person name="Brahamsha B."/>
            <person name="Larimer F.W."/>
            <person name="Land M.L."/>
            <person name="Hauser L."/>
            <person name="Chain P."/>
            <person name="Lamerdin J.E."/>
            <person name="Regala W."/>
            <person name="Allen E.E."/>
            <person name="McCarren J."/>
            <person name="Paulsen I.T."/>
            <person name="Dufresne A."/>
            <person name="Partensky F."/>
            <person name="Webb E.A."/>
            <person name="Waterbury J."/>
        </authorList>
    </citation>
    <scope>NUCLEOTIDE SEQUENCE [LARGE SCALE GENOMIC DNA]</scope>
    <source>
        <strain>WH8102</strain>
    </source>
</reference>
<feature type="chain" id="PRO_0000156512" description="Polyamine aminopropyltransferase">
    <location>
        <begin position="1"/>
        <end position="280"/>
    </location>
</feature>
<feature type="domain" description="PABS" evidence="1">
    <location>
        <begin position="2"/>
        <end position="235"/>
    </location>
</feature>
<feature type="active site" description="Proton acceptor" evidence="1">
    <location>
        <position position="155"/>
    </location>
</feature>
<feature type="binding site" evidence="1">
    <location>
        <position position="29"/>
    </location>
    <ligand>
        <name>S-methyl-5'-thioadenosine</name>
        <dbReference type="ChEBI" id="CHEBI:17509"/>
    </ligand>
</feature>
<feature type="binding site" evidence="1">
    <location>
        <position position="60"/>
    </location>
    <ligand>
        <name>spermidine</name>
        <dbReference type="ChEBI" id="CHEBI:57834"/>
    </ligand>
</feature>
<feature type="binding site" evidence="1">
    <location>
        <position position="84"/>
    </location>
    <ligand>
        <name>spermidine</name>
        <dbReference type="ChEBI" id="CHEBI:57834"/>
    </ligand>
</feature>
<feature type="binding site" evidence="1">
    <location>
        <position position="104"/>
    </location>
    <ligand>
        <name>S-methyl-5'-thioadenosine</name>
        <dbReference type="ChEBI" id="CHEBI:17509"/>
    </ligand>
</feature>
<feature type="binding site" evidence="1">
    <location>
        <begin position="136"/>
        <end position="137"/>
    </location>
    <ligand>
        <name>S-methyl-5'-thioadenosine</name>
        <dbReference type="ChEBI" id="CHEBI:17509"/>
    </ligand>
</feature>
<feature type="binding site" evidence="1">
    <location>
        <position position="162"/>
    </location>
    <ligand>
        <name>S-methyl-5'-thioadenosine</name>
        <dbReference type="ChEBI" id="CHEBI:17509"/>
    </ligand>
</feature>
<comment type="function">
    <text evidence="1">Catalyzes the irreversible transfer of a propylamine group from the amino donor S-adenosylmethioninamine (decarboxy-AdoMet) to putrescine (1,4-diaminobutane) to yield spermidine.</text>
</comment>
<comment type="catalytic activity">
    <reaction evidence="1">
        <text>S-adenosyl 3-(methylsulfanyl)propylamine + putrescine = S-methyl-5'-thioadenosine + spermidine + H(+)</text>
        <dbReference type="Rhea" id="RHEA:12721"/>
        <dbReference type="ChEBI" id="CHEBI:15378"/>
        <dbReference type="ChEBI" id="CHEBI:17509"/>
        <dbReference type="ChEBI" id="CHEBI:57443"/>
        <dbReference type="ChEBI" id="CHEBI:57834"/>
        <dbReference type="ChEBI" id="CHEBI:326268"/>
        <dbReference type="EC" id="2.5.1.16"/>
    </reaction>
</comment>
<comment type="pathway">
    <text evidence="1">Amine and polyamine biosynthesis; spermidine biosynthesis; spermidine from putrescine: step 1/1.</text>
</comment>
<comment type="subunit">
    <text evidence="1">Homodimer or homotetramer.</text>
</comment>
<comment type="subcellular location">
    <subcellularLocation>
        <location evidence="1">Cytoplasm</location>
    </subcellularLocation>
</comment>
<comment type="similarity">
    <text evidence="1">Belongs to the spermidine/spermine synthase family.</text>
</comment>
<proteinExistence type="inferred from homology"/>